<accession>A8A0I3</accession>
<protein>
    <recommendedName>
        <fullName evidence="1">Anhydro-N-acetylmuramic acid kinase</fullName>
        <ecNumber evidence="1">2.7.1.170</ecNumber>
    </recommendedName>
    <alternativeName>
        <fullName evidence="1">AnhMurNAc kinase</fullName>
    </alternativeName>
</protein>
<reference key="1">
    <citation type="journal article" date="2008" name="J. Bacteriol.">
        <title>The pangenome structure of Escherichia coli: comparative genomic analysis of E. coli commensal and pathogenic isolates.</title>
        <authorList>
            <person name="Rasko D.A."/>
            <person name="Rosovitz M.J."/>
            <person name="Myers G.S.A."/>
            <person name="Mongodin E.F."/>
            <person name="Fricke W.F."/>
            <person name="Gajer P."/>
            <person name="Crabtree J."/>
            <person name="Sebaihia M."/>
            <person name="Thomson N.R."/>
            <person name="Chaudhuri R."/>
            <person name="Henderson I.R."/>
            <person name="Sperandio V."/>
            <person name="Ravel J."/>
        </authorList>
    </citation>
    <scope>NUCLEOTIDE SEQUENCE [LARGE SCALE GENOMIC DNA]</scope>
    <source>
        <strain>HS</strain>
    </source>
</reference>
<dbReference type="EC" id="2.7.1.170" evidence="1"/>
<dbReference type="EMBL" id="CP000802">
    <property type="protein sequence ID" value="ABV06037.1"/>
    <property type="molecule type" value="Genomic_DNA"/>
</dbReference>
<dbReference type="RefSeq" id="WP_000835077.1">
    <property type="nucleotide sequence ID" value="NC_009800.1"/>
</dbReference>
<dbReference type="SMR" id="A8A0I3"/>
<dbReference type="GeneID" id="93775794"/>
<dbReference type="KEGG" id="ecx:EcHS_A1716"/>
<dbReference type="HOGENOM" id="CLU_038782_0_0_6"/>
<dbReference type="UniPathway" id="UPA00343"/>
<dbReference type="UniPathway" id="UPA00544"/>
<dbReference type="GO" id="GO:0005524">
    <property type="term" value="F:ATP binding"/>
    <property type="evidence" value="ECO:0007669"/>
    <property type="project" value="UniProtKB-UniRule"/>
</dbReference>
<dbReference type="GO" id="GO:0016301">
    <property type="term" value="F:kinase activity"/>
    <property type="evidence" value="ECO:0007669"/>
    <property type="project" value="UniProtKB-KW"/>
</dbReference>
<dbReference type="GO" id="GO:0016773">
    <property type="term" value="F:phosphotransferase activity, alcohol group as acceptor"/>
    <property type="evidence" value="ECO:0007669"/>
    <property type="project" value="UniProtKB-UniRule"/>
</dbReference>
<dbReference type="GO" id="GO:0097175">
    <property type="term" value="P:1,6-anhydro-N-acetyl-beta-muramic acid catabolic process"/>
    <property type="evidence" value="ECO:0007669"/>
    <property type="project" value="UniProtKB-UniRule"/>
</dbReference>
<dbReference type="GO" id="GO:0006040">
    <property type="term" value="P:amino sugar metabolic process"/>
    <property type="evidence" value="ECO:0007669"/>
    <property type="project" value="InterPro"/>
</dbReference>
<dbReference type="GO" id="GO:0009254">
    <property type="term" value="P:peptidoglycan turnover"/>
    <property type="evidence" value="ECO:0007669"/>
    <property type="project" value="UniProtKB-UniRule"/>
</dbReference>
<dbReference type="CDD" id="cd24050">
    <property type="entry name" value="ASKHA_NBD_ANMK"/>
    <property type="match status" value="1"/>
</dbReference>
<dbReference type="FunFam" id="3.30.420.40:FF:000090">
    <property type="entry name" value="Anhydro-N-acetylmuramic acid kinase"/>
    <property type="match status" value="1"/>
</dbReference>
<dbReference type="Gene3D" id="3.30.420.40">
    <property type="match status" value="2"/>
</dbReference>
<dbReference type="HAMAP" id="MF_01270">
    <property type="entry name" value="AnhMurNAc_kinase"/>
    <property type="match status" value="1"/>
</dbReference>
<dbReference type="InterPro" id="IPR005338">
    <property type="entry name" value="Anhydro_N_Ac-Mur_kinase"/>
</dbReference>
<dbReference type="InterPro" id="IPR043129">
    <property type="entry name" value="ATPase_NBD"/>
</dbReference>
<dbReference type="NCBIfam" id="NF007138">
    <property type="entry name" value="PRK09585.1-1"/>
    <property type="match status" value="1"/>
</dbReference>
<dbReference type="NCBIfam" id="NF007139">
    <property type="entry name" value="PRK09585.1-3"/>
    <property type="match status" value="1"/>
</dbReference>
<dbReference type="NCBIfam" id="NF007148">
    <property type="entry name" value="PRK09585.3-2"/>
    <property type="match status" value="1"/>
</dbReference>
<dbReference type="PANTHER" id="PTHR30605">
    <property type="entry name" value="ANHYDRO-N-ACETYLMURAMIC ACID KINASE"/>
    <property type="match status" value="1"/>
</dbReference>
<dbReference type="PANTHER" id="PTHR30605:SF0">
    <property type="entry name" value="ANHYDRO-N-ACETYLMURAMIC ACID KINASE"/>
    <property type="match status" value="1"/>
</dbReference>
<dbReference type="Pfam" id="PF03702">
    <property type="entry name" value="AnmK"/>
    <property type="match status" value="1"/>
</dbReference>
<dbReference type="SUPFAM" id="SSF53067">
    <property type="entry name" value="Actin-like ATPase domain"/>
    <property type="match status" value="1"/>
</dbReference>
<evidence type="ECO:0000255" key="1">
    <source>
        <dbReference type="HAMAP-Rule" id="MF_01270"/>
    </source>
</evidence>
<comment type="function">
    <text evidence="1">Catalyzes the specific phosphorylation of 1,6-anhydro-N-acetylmuramic acid (anhMurNAc) with the simultaneous cleavage of the 1,6-anhydro ring, generating MurNAc-6-P. Is required for the utilization of anhMurNAc either imported from the medium or derived from its own cell wall murein, and thus plays a role in cell wall recycling.</text>
</comment>
<comment type="catalytic activity">
    <reaction evidence="1">
        <text>1,6-anhydro-N-acetyl-beta-muramate + ATP + H2O = N-acetyl-D-muramate 6-phosphate + ADP + H(+)</text>
        <dbReference type="Rhea" id="RHEA:24952"/>
        <dbReference type="ChEBI" id="CHEBI:15377"/>
        <dbReference type="ChEBI" id="CHEBI:15378"/>
        <dbReference type="ChEBI" id="CHEBI:30616"/>
        <dbReference type="ChEBI" id="CHEBI:58690"/>
        <dbReference type="ChEBI" id="CHEBI:58722"/>
        <dbReference type="ChEBI" id="CHEBI:456216"/>
        <dbReference type="EC" id="2.7.1.170"/>
    </reaction>
</comment>
<comment type="pathway">
    <text evidence="1">Amino-sugar metabolism; 1,6-anhydro-N-acetylmuramate degradation.</text>
</comment>
<comment type="pathway">
    <text evidence="1">Cell wall biogenesis; peptidoglycan recycling.</text>
</comment>
<comment type="similarity">
    <text evidence="1">Belongs to the anhydro-N-acetylmuramic acid kinase family.</text>
</comment>
<name>ANMK_ECOHS</name>
<proteinExistence type="inferred from homology"/>
<keyword id="KW-0067">ATP-binding</keyword>
<keyword id="KW-0119">Carbohydrate metabolism</keyword>
<keyword id="KW-0418">Kinase</keyword>
<keyword id="KW-0547">Nucleotide-binding</keyword>
<keyword id="KW-0808">Transferase</keyword>
<sequence>MKSGRFIGVMSGTSLDGVDVVLATIDEHRVAQLASLSWPIPVSLKQAVLDICQGQQLTLSQFGQLDTQLGRLFADAVNALLKEQNLQARDIVAIGCHGQTVWHEPTGVAPHTLQIGDNNQIVARTGITVVGDFRRRDIALGGQGAPLVPAFHHALLAHPTERRMVLNIGGIANLSLLIPGQPVGGYDTGPGNMLMDAWIWRQAGKPYDKDAEWARAGKVILPLLQNMLSDPYFSQPAPKSTGREYFNYGWLERHLRHFPGVDPRDVQATLAELTAVTISEQVLLSGGCERLMVCGGGSRNPLLMARLAALLPGTEVTTTDAVGISGDDMEALAFAWLAWRTLAGLPGNLPSVTGASQETVLGAIFPANP</sequence>
<gene>
    <name evidence="1" type="primary">anmK</name>
    <name type="ordered locus">EcHS_A1716</name>
</gene>
<feature type="chain" id="PRO_1000067345" description="Anhydro-N-acetylmuramic acid kinase">
    <location>
        <begin position="1"/>
        <end position="369"/>
    </location>
</feature>
<feature type="binding site" evidence="1">
    <location>
        <begin position="12"/>
        <end position="19"/>
    </location>
    <ligand>
        <name>ATP</name>
        <dbReference type="ChEBI" id="CHEBI:30616"/>
    </ligand>
</feature>
<organism>
    <name type="scientific">Escherichia coli O9:H4 (strain HS)</name>
    <dbReference type="NCBI Taxonomy" id="331112"/>
    <lineage>
        <taxon>Bacteria</taxon>
        <taxon>Pseudomonadati</taxon>
        <taxon>Pseudomonadota</taxon>
        <taxon>Gammaproteobacteria</taxon>
        <taxon>Enterobacterales</taxon>
        <taxon>Enterobacteriaceae</taxon>
        <taxon>Escherichia</taxon>
    </lineage>
</organism>